<keyword id="KW-0238">DNA-binding</keyword>
<keyword id="KW-0479">Metal-binding</keyword>
<keyword id="KW-0539">Nucleus</keyword>
<keyword id="KW-1267">Proteomics identification</keyword>
<keyword id="KW-1185">Reference proteome</keyword>
<keyword id="KW-0677">Repeat</keyword>
<keyword id="KW-0804">Transcription</keyword>
<keyword id="KW-0805">Transcription regulation</keyword>
<keyword id="KW-0862">Zinc</keyword>
<keyword id="KW-0863">Zinc-finger</keyword>
<dbReference type="EMBL" id="AK021699">
    <property type="protein sequence ID" value="BAB13878.1"/>
    <property type="molecule type" value="mRNA"/>
</dbReference>
<dbReference type="EMBL" id="BC009374">
    <property type="protein sequence ID" value="AAH09374.1"/>
    <property type="molecule type" value="mRNA"/>
</dbReference>
<dbReference type="CCDS" id="CCDS12097.1"/>
<dbReference type="RefSeq" id="NP_001287772.1">
    <property type="nucleotide sequence ID" value="NM_001300843.1"/>
</dbReference>
<dbReference type="RefSeq" id="NP_079243.1">
    <property type="nucleotide sequence ID" value="NM_024967.3"/>
</dbReference>
<dbReference type="SMR" id="Q9HAH1"/>
<dbReference type="BioGRID" id="123082">
    <property type="interactions" value="15"/>
</dbReference>
<dbReference type="FunCoup" id="Q9HAH1">
    <property type="interactions" value="8"/>
</dbReference>
<dbReference type="IntAct" id="Q9HAH1">
    <property type="interactions" value="11"/>
</dbReference>
<dbReference type="STRING" id="9606.ENSP00000302603"/>
<dbReference type="GlyGen" id="Q9HAH1">
    <property type="glycosylation" value="1 site, 1 O-linked glycan (1 site)"/>
</dbReference>
<dbReference type="iPTMnet" id="Q9HAH1"/>
<dbReference type="PhosphoSitePlus" id="Q9HAH1"/>
<dbReference type="BioMuta" id="ZNF556"/>
<dbReference type="DMDM" id="74762747"/>
<dbReference type="jPOST" id="Q9HAH1"/>
<dbReference type="MassIVE" id="Q9HAH1"/>
<dbReference type="PaxDb" id="9606-ENSP00000302603"/>
<dbReference type="PeptideAtlas" id="Q9HAH1"/>
<dbReference type="ProteomicsDB" id="81403"/>
<dbReference type="Pumba" id="Q9HAH1"/>
<dbReference type="Antibodypedia" id="10860">
    <property type="antibodies" value="99 antibodies from 17 providers"/>
</dbReference>
<dbReference type="DNASU" id="80032"/>
<dbReference type="Ensembl" id="ENST00000307635.3">
    <property type="protein sequence ID" value="ENSP00000302603.2"/>
    <property type="gene ID" value="ENSG00000172000.7"/>
</dbReference>
<dbReference type="GeneID" id="80032"/>
<dbReference type="KEGG" id="hsa:80032"/>
<dbReference type="MANE-Select" id="ENST00000307635.3">
    <property type="protein sequence ID" value="ENSP00000302603.2"/>
    <property type="RefSeq nucleotide sequence ID" value="NM_024967.3"/>
    <property type="RefSeq protein sequence ID" value="NP_079243.1"/>
</dbReference>
<dbReference type="UCSC" id="uc002lwp.2">
    <property type="organism name" value="human"/>
</dbReference>
<dbReference type="AGR" id="HGNC:25669"/>
<dbReference type="CTD" id="80032"/>
<dbReference type="GeneCards" id="ZNF556"/>
<dbReference type="HGNC" id="HGNC:25669">
    <property type="gene designation" value="ZNF556"/>
</dbReference>
<dbReference type="HPA" id="ENSG00000172000">
    <property type="expression patterns" value="Tissue enhanced (ovary, tongue)"/>
</dbReference>
<dbReference type="neXtProt" id="NX_Q9HAH1"/>
<dbReference type="OpenTargets" id="ENSG00000172000"/>
<dbReference type="PharmGKB" id="PA134949188"/>
<dbReference type="VEuPathDB" id="HostDB:ENSG00000172000"/>
<dbReference type="eggNOG" id="KOG1721">
    <property type="taxonomic scope" value="Eukaryota"/>
</dbReference>
<dbReference type="GeneTree" id="ENSGT00940000164313"/>
<dbReference type="HOGENOM" id="CLU_002678_44_3_1"/>
<dbReference type="InParanoid" id="Q9HAH1"/>
<dbReference type="OMA" id="PKSFRVH"/>
<dbReference type="OrthoDB" id="6077919at2759"/>
<dbReference type="PAN-GO" id="Q9HAH1">
    <property type="GO annotations" value="3 GO annotations based on evolutionary models"/>
</dbReference>
<dbReference type="PhylomeDB" id="Q9HAH1"/>
<dbReference type="TreeFam" id="TF338854"/>
<dbReference type="PathwayCommons" id="Q9HAH1"/>
<dbReference type="Reactome" id="R-HSA-212436">
    <property type="pathway name" value="Generic Transcription Pathway"/>
</dbReference>
<dbReference type="SignaLink" id="Q9HAH1"/>
<dbReference type="BioGRID-ORCS" id="80032">
    <property type="hits" value="13 hits in 1168 CRISPR screens"/>
</dbReference>
<dbReference type="GenomeRNAi" id="80032"/>
<dbReference type="Pharos" id="Q9HAH1">
    <property type="development level" value="Tdark"/>
</dbReference>
<dbReference type="PRO" id="PR:Q9HAH1"/>
<dbReference type="Proteomes" id="UP000005640">
    <property type="component" value="Chromosome 19"/>
</dbReference>
<dbReference type="RNAct" id="Q9HAH1">
    <property type="molecule type" value="protein"/>
</dbReference>
<dbReference type="Bgee" id="ENSG00000172000">
    <property type="expression patterns" value="Expressed in secondary oocyte and 72 other cell types or tissues"/>
</dbReference>
<dbReference type="ExpressionAtlas" id="Q9HAH1">
    <property type="expression patterns" value="baseline and differential"/>
</dbReference>
<dbReference type="GO" id="GO:0005634">
    <property type="term" value="C:nucleus"/>
    <property type="evidence" value="ECO:0000318"/>
    <property type="project" value="GO_Central"/>
</dbReference>
<dbReference type="GO" id="GO:0000981">
    <property type="term" value="F:DNA-binding transcription factor activity, RNA polymerase II-specific"/>
    <property type="evidence" value="ECO:0000318"/>
    <property type="project" value="GO_Central"/>
</dbReference>
<dbReference type="GO" id="GO:0000977">
    <property type="term" value="F:RNA polymerase II transcription regulatory region sequence-specific DNA binding"/>
    <property type="evidence" value="ECO:0000318"/>
    <property type="project" value="GO_Central"/>
</dbReference>
<dbReference type="GO" id="GO:0008270">
    <property type="term" value="F:zinc ion binding"/>
    <property type="evidence" value="ECO:0007669"/>
    <property type="project" value="UniProtKB-KW"/>
</dbReference>
<dbReference type="GO" id="GO:0006357">
    <property type="term" value="P:regulation of transcription by RNA polymerase II"/>
    <property type="evidence" value="ECO:0000318"/>
    <property type="project" value="GO_Central"/>
</dbReference>
<dbReference type="CDD" id="cd07765">
    <property type="entry name" value="KRAB_A-box"/>
    <property type="match status" value="1"/>
</dbReference>
<dbReference type="FunFam" id="3.30.160.60:FF:000184">
    <property type="entry name" value="Zinc finger protein 333"/>
    <property type="match status" value="2"/>
</dbReference>
<dbReference type="FunFam" id="3.30.160.60:FF:000023">
    <property type="entry name" value="zinc finger protein 37 homolog"/>
    <property type="match status" value="1"/>
</dbReference>
<dbReference type="FunFam" id="3.30.160.60:FF:002018">
    <property type="entry name" value="Zinc finger protein 556"/>
    <property type="match status" value="3"/>
</dbReference>
<dbReference type="FunFam" id="3.30.160.60:FF:002386">
    <property type="entry name" value="Zinc finger protein 556"/>
    <property type="match status" value="1"/>
</dbReference>
<dbReference type="FunFam" id="3.30.160.60:FF:002562">
    <property type="entry name" value="Zinc finger protein 556"/>
    <property type="match status" value="1"/>
</dbReference>
<dbReference type="FunFam" id="3.30.160.60:FF:000564">
    <property type="entry name" value="zinc finger protein 699"/>
    <property type="match status" value="1"/>
</dbReference>
<dbReference type="Gene3D" id="6.10.140.140">
    <property type="match status" value="1"/>
</dbReference>
<dbReference type="Gene3D" id="3.30.160.60">
    <property type="entry name" value="Classic Zinc Finger"/>
    <property type="match status" value="9"/>
</dbReference>
<dbReference type="InterPro" id="IPR001909">
    <property type="entry name" value="KRAB"/>
</dbReference>
<dbReference type="InterPro" id="IPR036051">
    <property type="entry name" value="KRAB_dom_sf"/>
</dbReference>
<dbReference type="InterPro" id="IPR050758">
    <property type="entry name" value="Znf_C2H2-type"/>
</dbReference>
<dbReference type="InterPro" id="IPR036236">
    <property type="entry name" value="Znf_C2H2_sf"/>
</dbReference>
<dbReference type="InterPro" id="IPR013087">
    <property type="entry name" value="Znf_C2H2_type"/>
</dbReference>
<dbReference type="PANTHER" id="PTHR23234:SF10">
    <property type="entry name" value="RIKEN CDNA 6720489N17 GENE-RELATED"/>
    <property type="match status" value="1"/>
</dbReference>
<dbReference type="PANTHER" id="PTHR23234">
    <property type="entry name" value="ZNF44 PROTEIN"/>
    <property type="match status" value="1"/>
</dbReference>
<dbReference type="Pfam" id="PF01352">
    <property type="entry name" value="KRAB"/>
    <property type="match status" value="1"/>
</dbReference>
<dbReference type="Pfam" id="PF00096">
    <property type="entry name" value="zf-C2H2"/>
    <property type="match status" value="6"/>
</dbReference>
<dbReference type="Pfam" id="PF13894">
    <property type="entry name" value="zf-C2H2_4"/>
    <property type="match status" value="1"/>
</dbReference>
<dbReference type="SMART" id="SM00349">
    <property type="entry name" value="KRAB"/>
    <property type="match status" value="1"/>
</dbReference>
<dbReference type="SMART" id="SM00355">
    <property type="entry name" value="ZnF_C2H2"/>
    <property type="match status" value="9"/>
</dbReference>
<dbReference type="SUPFAM" id="SSF57667">
    <property type="entry name" value="beta-beta-alpha zinc fingers"/>
    <property type="match status" value="6"/>
</dbReference>
<dbReference type="SUPFAM" id="SSF109640">
    <property type="entry name" value="KRAB domain (Kruppel-associated box)"/>
    <property type="match status" value="1"/>
</dbReference>
<dbReference type="PROSITE" id="PS50805">
    <property type="entry name" value="KRAB"/>
    <property type="match status" value="1"/>
</dbReference>
<dbReference type="PROSITE" id="PS00028">
    <property type="entry name" value="ZINC_FINGER_C2H2_1"/>
    <property type="match status" value="9"/>
</dbReference>
<dbReference type="PROSITE" id="PS50157">
    <property type="entry name" value="ZINC_FINGER_C2H2_2"/>
    <property type="match status" value="9"/>
</dbReference>
<comment type="function">
    <text>May be involved in transcriptional regulation.</text>
</comment>
<comment type="subcellular location">
    <subcellularLocation>
        <location evidence="4">Nucleus</location>
    </subcellularLocation>
</comment>
<comment type="similarity">
    <text evidence="4">Belongs to the krueppel C2H2-type zinc-finger protein family.</text>
</comment>
<organism>
    <name type="scientific">Homo sapiens</name>
    <name type="common">Human</name>
    <dbReference type="NCBI Taxonomy" id="9606"/>
    <lineage>
        <taxon>Eukaryota</taxon>
        <taxon>Metazoa</taxon>
        <taxon>Chordata</taxon>
        <taxon>Craniata</taxon>
        <taxon>Vertebrata</taxon>
        <taxon>Euteleostomi</taxon>
        <taxon>Mammalia</taxon>
        <taxon>Eutheria</taxon>
        <taxon>Euarchontoglires</taxon>
        <taxon>Primates</taxon>
        <taxon>Haplorrhini</taxon>
        <taxon>Catarrhini</taxon>
        <taxon>Hominidae</taxon>
        <taxon>Homo</taxon>
    </lineage>
</organism>
<name>ZN556_HUMAN</name>
<evidence type="ECO:0000255" key="1">
    <source>
        <dbReference type="PROSITE-ProRule" id="PRU00042"/>
    </source>
</evidence>
<evidence type="ECO:0000255" key="2">
    <source>
        <dbReference type="PROSITE-ProRule" id="PRU00119"/>
    </source>
</evidence>
<evidence type="ECO:0000256" key="3">
    <source>
        <dbReference type="SAM" id="MobiDB-lite"/>
    </source>
</evidence>
<evidence type="ECO:0000305" key="4"/>
<accession>Q9HAH1</accession>
<accession>Q96GM3</accession>
<protein>
    <recommendedName>
        <fullName>Zinc finger protein 556</fullName>
    </recommendedName>
</protein>
<proteinExistence type="evidence at protein level"/>
<sequence length="456" mass="51581">MDTVVFEDVVVDFTLEEWALLNPAQRKLYRDVMLETFKHLASVDNEAQLKASGSISQQDTSGEKLSLKQKIEKFTRKNIWASLLGKNWEEHSVKDKHNTKERHLSRNPRVERPCKSSKGNKRGRTFRKTRNCNRHLRKNCCTSVRRYECSQCGKLFTHSSSLIRHKRAHSGQKLYKCKECGKAFSRPSYLQTHEKTHSGEKPYACQSCGKTFLRSHSLTEHVRTHTGEKPYECGQCGKGFSCPKSFRAHVMMHAGGRPYECKHCGKAFRCQKSFRVHMIMHAGGRPYECKQCGKAYCWATSFQRHVRIHNGEKPYKCGKCGKAFGWPSSLHKHARTHAKKKPVSGGSVGKSSARPRPSTDVKSQTREKVYKCETCGKTYGWSSSLHKHERKHTGEKPVNAASVGKPSGGLCSSKNVRTQIGQKPSKCEKCGKAFSCPKAFQGHVRSHTGKKSCTSK</sequence>
<reference key="1">
    <citation type="journal article" date="2004" name="Nat. Genet.">
        <title>Complete sequencing and characterization of 21,243 full-length human cDNAs.</title>
        <authorList>
            <person name="Ota T."/>
            <person name="Suzuki Y."/>
            <person name="Nishikawa T."/>
            <person name="Otsuki T."/>
            <person name="Sugiyama T."/>
            <person name="Irie R."/>
            <person name="Wakamatsu A."/>
            <person name="Hayashi K."/>
            <person name="Sato H."/>
            <person name="Nagai K."/>
            <person name="Kimura K."/>
            <person name="Makita H."/>
            <person name="Sekine M."/>
            <person name="Obayashi M."/>
            <person name="Nishi T."/>
            <person name="Shibahara T."/>
            <person name="Tanaka T."/>
            <person name="Ishii S."/>
            <person name="Yamamoto J."/>
            <person name="Saito K."/>
            <person name="Kawai Y."/>
            <person name="Isono Y."/>
            <person name="Nakamura Y."/>
            <person name="Nagahari K."/>
            <person name="Murakami K."/>
            <person name="Yasuda T."/>
            <person name="Iwayanagi T."/>
            <person name="Wagatsuma M."/>
            <person name="Shiratori A."/>
            <person name="Sudo H."/>
            <person name="Hosoiri T."/>
            <person name="Kaku Y."/>
            <person name="Kodaira H."/>
            <person name="Kondo H."/>
            <person name="Sugawara M."/>
            <person name="Takahashi M."/>
            <person name="Kanda K."/>
            <person name="Yokoi T."/>
            <person name="Furuya T."/>
            <person name="Kikkawa E."/>
            <person name="Omura Y."/>
            <person name="Abe K."/>
            <person name="Kamihara K."/>
            <person name="Katsuta N."/>
            <person name="Sato K."/>
            <person name="Tanikawa M."/>
            <person name="Yamazaki M."/>
            <person name="Ninomiya K."/>
            <person name="Ishibashi T."/>
            <person name="Yamashita H."/>
            <person name="Murakawa K."/>
            <person name="Fujimori K."/>
            <person name="Tanai H."/>
            <person name="Kimata M."/>
            <person name="Watanabe M."/>
            <person name="Hiraoka S."/>
            <person name="Chiba Y."/>
            <person name="Ishida S."/>
            <person name="Ono Y."/>
            <person name="Takiguchi S."/>
            <person name="Watanabe S."/>
            <person name="Yosida M."/>
            <person name="Hotuta T."/>
            <person name="Kusano J."/>
            <person name="Kanehori K."/>
            <person name="Takahashi-Fujii A."/>
            <person name="Hara H."/>
            <person name="Tanase T.-O."/>
            <person name="Nomura Y."/>
            <person name="Togiya S."/>
            <person name="Komai F."/>
            <person name="Hara R."/>
            <person name="Takeuchi K."/>
            <person name="Arita M."/>
            <person name="Imose N."/>
            <person name="Musashino K."/>
            <person name="Yuuki H."/>
            <person name="Oshima A."/>
            <person name="Sasaki N."/>
            <person name="Aotsuka S."/>
            <person name="Yoshikawa Y."/>
            <person name="Matsunawa H."/>
            <person name="Ichihara T."/>
            <person name="Shiohata N."/>
            <person name="Sano S."/>
            <person name="Moriya S."/>
            <person name="Momiyama H."/>
            <person name="Satoh N."/>
            <person name="Takami S."/>
            <person name="Terashima Y."/>
            <person name="Suzuki O."/>
            <person name="Nakagawa S."/>
            <person name="Senoh A."/>
            <person name="Mizoguchi H."/>
            <person name="Goto Y."/>
            <person name="Shimizu F."/>
            <person name="Wakebe H."/>
            <person name="Hishigaki H."/>
            <person name="Watanabe T."/>
            <person name="Sugiyama A."/>
            <person name="Takemoto M."/>
            <person name="Kawakami B."/>
            <person name="Yamazaki M."/>
            <person name="Watanabe K."/>
            <person name="Kumagai A."/>
            <person name="Itakura S."/>
            <person name="Fukuzumi Y."/>
            <person name="Fujimori Y."/>
            <person name="Komiyama M."/>
            <person name="Tashiro H."/>
            <person name="Tanigami A."/>
            <person name="Fujiwara T."/>
            <person name="Ono T."/>
            <person name="Yamada K."/>
            <person name="Fujii Y."/>
            <person name="Ozaki K."/>
            <person name="Hirao M."/>
            <person name="Ohmori Y."/>
            <person name="Kawabata A."/>
            <person name="Hikiji T."/>
            <person name="Kobatake N."/>
            <person name="Inagaki H."/>
            <person name="Ikema Y."/>
            <person name="Okamoto S."/>
            <person name="Okitani R."/>
            <person name="Kawakami T."/>
            <person name="Noguchi S."/>
            <person name="Itoh T."/>
            <person name="Shigeta K."/>
            <person name="Senba T."/>
            <person name="Matsumura K."/>
            <person name="Nakajima Y."/>
            <person name="Mizuno T."/>
            <person name="Morinaga M."/>
            <person name="Sasaki M."/>
            <person name="Togashi T."/>
            <person name="Oyama M."/>
            <person name="Hata H."/>
            <person name="Watanabe M."/>
            <person name="Komatsu T."/>
            <person name="Mizushima-Sugano J."/>
            <person name="Satoh T."/>
            <person name="Shirai Y."/>
            <person name="Takahashi Y."/>
            <person name="Nakagawa K."/>
            <person name="Okumura K."/>
            <person name="Nagase T."/>
            <person name="Nomura N."/>
            <person name="Kikuchi H."/>
            <person name="Masuho Y."/>
            <person name="Yamashita R."/>
            <person name="Nakai K."/>
            <person name="Yada T."/>
            <person name="Nakamura Y."/>
            <person name="Ohara O."/>
            <person name="Isogai T."/>
            <person name="Sugano S."/>
        </authorList>
    </citation>
    <scope>NUCLEOTIDE SEQUENCE [LARGE SCALE MRNA]</scope>
    <source>
        <tissue>Embryo</tissue>
    </source>
</reference>
<reference key="2">
    <citation type="journal article" date="2004" name="Genome Res.">
        <title>The status, quality, and expansion of the NIH full-length cDNA project: the Mammalian Gene Collection (MGC).</title>
        <authorList>
            <consortium name="The MGC Project Team"/>
        </authorList>
    </citation>
    <scope>NUCLEOTIDE SEQUENCE [LARGE SCALE MRNA]</scope>
    <source>
        <tissue>Muscle</tissue>
    </source>
</reference>
<gene>
    <name type="primary">ZNF556</name>
</gene>
<feature type="chain" id="PRO_0000274876" description="Zinc finger protein 556">
    <location>
        <begin position="1"/>
        <end position="456"/>
    </location>
</feature>
<feature type="domain" description="KRAB" evidence="2">
    <location>
        <begin position="4"/>
        <end position="77"/>
    </location>
</feature>
<feature type="zinc finger region" description="C2H2-type 1" evidence="1">
    <location>
        <begin position="147"/>
        <end position="169"/>
    </location>
</feature>
<feature type="zinc finger region" description="C2H2-type 2" evidence="1">
    <location>
        <begin position="175"/>
        <end position="197"/>
    </location>
</feature>
<feature type="zinc finger region" description="C2H2-type 3" evidence="1">
    <location>
        <begin position="203"/>
        <end position="225"/>
    </location>
</feature>
<feature type="zinc finger region" description="C2H2-type 4" evidence="1">
    <location>
        <begin position="231"/>
        <end position="253"/>
    </location>
</feature>
<feature type="zinc finger region" description="C2H2-type 5" evidence="1">
    <location>
        <begin position="259"/>
        <end position="281"/>
    </location>
</feature>
<feature type="zinc finger region" description="C2H2-type 6" evidence="1">
    <location>
        <begin position="287"/>
        <end position="309"/>
    </location>
</feature>
<feature type="zinc finger region" description="C2H2-type 7" evidence="1">
    <location>
        <begin position="315"/>
        <end position="337"/>
    </location>
</feature>
<feature type="zinc finger region" description="C2H2-type 8" evidence="1">
    <location>
        <begin position="370"/>
        <end position="392"/>
    </location>
</feature>
<feature type="zinc finger region" description="C2H2-type 9" evidence="1">
    <location>
        <begin position="425"/>
        <end position="447"/>
    </location>
</feature>
<feature type="region of interest" description="Disordered" evidence="3">
    <location>
        <begin position="93"/>
        <end position="125"/>
    </location>
</feature>
<feature type="region of interest" description="Disordered" evidence="3">
    <location>
        <begin position="331"/>
        <end position="365"/>
    </location>
</feature>
<feature type="region of interest" description="Disordered" evidence="3">
    <location>
        <begin position="386"/>
        <end position="406"/>
    </location>
</feature>
<feature type="compositionally biased region" description="Basic and acidic residues" evidence="3">
    <location>
        <begin position="93"/>
        <end position="114"/>
    </location>
</feature>
<feature type="compositionally biased region" description="Basic residues" evidence="3">
    <location>
        <begin position="331"/>
        <end position="342"/>
    </location>
</feature>
<feature type="compositionally biased region" description="Low complexity" evidence="3">
    <location>
        <begin position="343"/>
        <end position="352"/>
    </location>
</feature>
<feature type="sequence variant" id="VAR_030355" description="In dbSNP:rs10421121.">
    <original>R</original>
    <variation>C</variation>
    <location>
        <position position="137"/>
    </location>
</feature>
<feature type="sequence variant" id="VAR_052863" description="In dbSNP:rs35499960.">
    <original>R</original>
    <variation>L</variation>
    <location>
        <position position="146"/>
    </location>
</feature>
<feature type="sequence variant" id="VAR_052864" description="In dbSNP:rs35296337.">
    <original>A</original>
    <variation>T</variation>
    <location>
        <position position="353"/>
    </location>
</feature>
<feature type="sequence variant" id="VAR_052865" description="In dbSNP:rs35494032.">
    <original>E</original>
    <variation>K</variation>
    <location>
        <position position="428"/>
    </location>
</feature>